<proteinExistence type="evidence at protein level"/>
<gene>
    <name evidence="7" type="primary">ANKRD24</name>
    <name type="synonym">KIAA1981</name>
</gene>
<evidence type="ECO:0000250" key="1">
    <source>
        <dbReference type="UniProtKB" id="Q80VM7"/>
    </source>
</evidence>
<evidence type="ECO:0000255" key="2"/>
<evidence type="ECO:0000256" key="3">
    <source>
        <dbReference type="SAM" id="MobiDB-lite"/>
    </source>
</evidence>
<evidence type="ECO:0000269" key="4">
    <source>
    </source>
</evidence>
<evidence type="ECO:0000303" key="5">
    <source>
    </source>
</evidence>
<evidence type="ECO:0000305" key="6"/>
<evidence type="ECO:0000312" key="7">
    <source>
        <dbReference type="HGNC" id="HGNC:29424"/>
    </source>
</evidence>
<name>ANR24_HUMAN</name>
<dbReference type="EMBL" id="AC006930">
    <property type="protein sequence ID" value="AAD15479.1"/>
    <property type="status" value="ALT_SEQ"/>
    <property type="molecule type" value="Genomic_DNA"/>
</dbReference>
<dbReference type="EMBL" id="AC005578">
    <property type="protein sequence ID" value="AAC33490.1"/>
    <property type="status" value="ALT_SEQ"/>
    <property type="molecule type" value="Genomic_DNA"/>
</dbReference>
<dbReference type="EMBL" id="AB075861">
    <property type="protein sequence ID" value="BAB85567.1"/>
    <property type="molecule type" value="mRNA"/>
</dbReference>
<dbReference type="CCDS" id="CCDS45925.1">
    <molecule id="Q8TF21-1"/>
</dbReference>
<dbReference type="RefSeq" id="NP_001380482.1">
    <molecule id="Q8TF21-1"/>
    <property type="nucleotide sequence ID" value="NM_001393553.1"/>
</dbReference>
<dbReference type="RefSeq" id="NP_001380914.1">
    <molecule id="Q8TF21-1"/>
    <property type="nucleotide sequence ID" value="NM_001393985.1"/>
</dbReference>
<dbReference type="RefSeq" id="NP_597732.1">
    <molecule id="Q8TF21-1"/>
    <property type="nucleotide sequence ID" value="NM_133475.1"/>
</dbReference>
<dbReference type="SMR" id="Q8TF21"/>
<dbReference type="BioGRID" id="128096">
    <property type="interactions" value="9"/>
</dbReference>
<dbReference type="FunCoup" id="Q8TF21">
    <property type="interactions" value="31"/>
</dbReference>
<dbReference type="IntAct" id="Q8TF21">
    <property type="interactions" value="10"/>
</dbReference>
<dbReference type="MINT" id="Q8TF21"/>
<dbReference type="STRING" id="9606.ENSP00000471252"/>
<dbReference type="iPTMnet" id="Q8TF21"/>
<dbReference type="PhosphoSitePlus" id="Q8TF21"/>
<dbReference type="BioMuta" id="ANKRD24"/>
<dbReference type="DMDM" id="182627626"/>
<dbReference type="jPOST" id="Q8TF21"/>
<dbReference type="MassIVE" id="Q8TF21"/>
<dbReference type="PaxDb" id="9606-ENSP00000471252"/>
<dbReference type="PeptideAtlas" id="Q8TF21"/>
<dbReference type="ProteomicsDB" id="74542">
    <molecule id="Q8TF21-1"/>
</dbReference>
<dbReference type="ProteomicsDB" id="74543">
    <molecule id="Q8TF21-2"/>
</dbReference>
<dbReference type="Antibodypedia" id="53380">
    <property type="antibodies" value="16 antibodies from 10 providers"/>
</dbReference>
<dbReference type="DNASU" id="170961"/>
<dbReference type="Ensembl" id="ENST00000262970.9">
    <molecule id="Q8TF21-2"/>
    <property type="protein sequence ID" value="ENSP00000262970.4"/>
    <property type="gene ID" value="ENSG00000089847.13"/>
</dbReference>
<dbReference type="Ensembl" id="ENST00000318934.9">
    <molecule id="Q8TF21-1"/>
    <property type="protein sequence ID" value="ENSP00000321731.4"/>
    <property type="gene ID" value="ENSG00000089847.13"/>
</dbReference>
<dbReference type="Ensembl" id="ENST00000600132.5">
    <molecule id="Q8TF21-1"/>
    <property type="protein sequence ID" value="ENSP00000471252.1"/>
    <property type="gene ID" value="ENSG00000089847.13"/>
</dbReference>
<dbReference type="GeneID" id="170961"/>
<dbReference type="KEGG" id="hsa:170961"/>
<dbReference type="MANE-Select" id="ENST00000318934.9">
    <property type="protein sequence ID" value="ENSP00000321731.4"/>
    <property type="RefSeq nucleotide sequence ID" value="NM_001393985.1"/>
    <property type="RefSeq protein sequence ID" value="NP_001380914.1"/>
</dbReference>
<dbReference type="UCSC" id="uc002lzt.3">
    <molecule id="Q8TF21-1"/>
    <property type="organism name" value="human"/>
</dbReference>
<dbReference type="AGR" id="HGNC:29424"/>
<dbReference type="CTD" id="170961"/>
<dbReference type="DisGeNET" id="170961"/>
<dbReference type="GeneCards" id="ANKRD24"/>
<dbReference type="HGNC" id="HGNC:29424">
    <property type="gene designation" value="ANKRD24"/>
</dbReference>
<dbReference type="HPA" id="ENSG00000089847">
    <property type="expression patterns" value="Tissue enhanced (brain, testis)"/>
</dbReference>
<dbReference type="MIM" id="620234">
    <property type="type" value="gene"/>
</dbReference>
<dbReference type="neXtProt" id="NX_Q8TF21"/>
<dbReference type="OpenTargets" id="ENSG00000089847"/>
<dbReference type="PharmGKB" id="PA134937612"/>
<dbReference type="VEuPathDB" id="HostDB:ENSG00000089847"/>
<dbReference type="eggNOG" id="ENOG502QQ0K">
    <property type="taxonomic scope" value="Eukaryota"/>
</dbReference>
<dbReference type="GeneTree" id="ENSGT00940000159237"/>
<dbReference type="HOGENOM" id="CLU_005323_0_0_1"/>
<dbReference type="InParanoid" id="Q8TF21"/>
<dbReference type="OMA" id="GPMEMEL"/>
<dbReference type="OrthoDB" id="341259at2759"/>
<dbReference type="PAN-GO" id="Q8TF21">
    <property type="GO annotations" value="0 GO annotations based on evolutionary models"/>
</dbReference>
<dbReference type="PhylomeDB" id="Q8TF21"/>
<dbReference type="TreeFam" id="TF331274"/>
<dbReference type="PathwayCommons" id="Q8TF21"/>
<dbReference type="SignaLink" id="Q8TF21"/>
<dbReference type="BioGRID-ORCS" id="170961">
    <property type="hits" value="13 hits in 1143 CRISPR screens"/>
</dbReference>
<dbReference type="CD-CODE" id="FB4E32DD">
    <property type="entry name" value="Presynaptic clusters and postsynaptic densities"/>
</dbReference>
<dbReference type="ChiTaRS" id="ANKRD24">
    <property type="organism name" value="human"/>
</dbReference>
<dbReference type="GenomeRNAi" id="170961"/>
<dbReference type="Pharos" id="Q8TF21">
    <property type="development level" value="Tdark"/>
</dbReference>
<dbReference type="PRO" id="PR:Q8TF21"/>
<dbReference type="Proteomes" id="UP000005640">
    <property type="component" value="Chromosome 19"/>
</dbReference>
<dbReference type="RNAct" id="Q8TF21">
    <property type="molecule type" value="protein"/>
</dbReference>
<dbReference type="Bgee" id="ENSG00000089847">
    <property type="expression patterns" value="Expressed in right frontal lobe and 97 other cell types or tissues"/>
</dbReference>
<dbReference type="ExpressionAtlas" id="Q8TF21">
    <property type="expression patterns" value="baseline and differential"/>
</dbReference>
<dbReference type="GO" id="GO:0005886">
    <property type="term" value="C:plasma membrane"/>
    <property type="evidence" value="ECO:0000250"/>
    <property type="project" value="UniProtKB"/>
</dbReference>
<dbReference type="GO" id="GO:0032420">
    <property type="term" value="C:stereocilium"/>
    <property type="evidence" value="ECO:0000250"/>
    <property type="project" value="UniProtKB"/>
</dbReference>
<dbReference type="GO" id="GO:0003779">
    <property type="term" value="F:actin binding"/>
    <property type="evidence" value="ECO:0007669"/>
    <property type="project" value="InterPro"/>
</dbReference>
<dbReference type="GO" id="GO:0060088">
    <property type="term" value="P:auditory receptor cell stereocilium organization"/>
    <property type="evidence" value="ECO:0000250"/>
    <property type="project" value="UniProtKB"/>
</dbReference>
<dbReference type="GO" id="GO:0007605">
    <property type="term" value="P:sensory perception of sound"/>
    <property type="evidence" value="ECO:0000250"/>
    <property type="project" value="UniProtKB"/>
</dbReference>
<dbReference type="Gene3D" id="1.25.40.20">
    <property type="entry name" value="Ankyrin repeat-containing domain"/>
    <property type="match status" value="2"/>
</dbReference>
<dbReference type="InterPro" id="IPR002110">
    <property type="entry name" value="Ankyrin_rpt"/>
</dbReference>
<dbReference type="InterPro" id="IPR036770">
    <property type="entry name" value="Ankyrin_rpt-contain_sf"/>
</dbReference>
<dbReference type="InterPro" id="IPR042420">
    <property type="entry name" value="RAI14/UACA"/>
</dbReference>
<dbReference type="PANTHER" id="PTHR24129">
    <property type="entry name" value="ANKYCORBIN"/>
    <property type="match status" value="1"/>
</dbReference>
<dbReference type="PANTHER" id="PTHR24129:SF0">
    <property type="entry name" value="ANKYCORBIN"/>
    <property type="match status" value="1"/>
</dbReference>
<dbReference type="Pfam" id="PF00023">
    <property type="entry name" value="Ank"/>
    <property type="match status" value="1"/>
</dbReference>
<dbReference type="Pfam" id="PF12796">
    <property type="entry name" value="Ank_2"/>
    <property type="match status" value="1"/>
</dbReference>
<dbReference type="SMART" id="SM00248">
    <property type="entry name" value="ANK"/>
    <property type="match status" value="5"/>
</dbReference>
<dbReference type="SUPFAM" id="SSF48403">
    <property type="entry name" value="Ankyrin repeat"/>
    <property type="match status" value="1"/>
</dbReference>
<dbReference type="PROSITE" id="PS50297">
    <property type="entry name" value="ANK_REP_REGION"/>
    <property type="match status" value="1"/>
</dbReference>
<dbReference type="PROSITE" id="PS50088">
    <property type="entry name" value="ANK_REPEAT"/>
    <property type="match status" value="4"/>
</dbReference>
<protein>
    <recommendedName>
        <fullName>Ankyrin repeat domain-containing protein 24</fullName>
    </recommendedName>
</protein>
<feature type="chain" id="PRO_0000328836" description="Ankyrin repeat domain-containing protein 24">
    <location>
        <begin position="1"/>
        <end position="1146"/>
    </location>
</feature>
<feature type="repeat" description="ANK 1">
    <location>
        <begin position="81"/>
        <end position="110"/>
    </location>
</feature>
<feature type="repeat" description="ANK 2">
    <location>
        <begin position="114"/>
        <end position="143"/>
    </location>
</feature>
<feature type="repeat" description="ANK 3">
    <location>
        <begin position="147"/>
        <end position="176"/>
    </location>
</feature>
<feature type="repeat" description="ANK 4">
    <location>
        <begin position="180"/>
        <end position="209"/>
    </location>
</feature>
<feature type="repeat" description="ANK 5">
    <location>
        <begin position="213"/>
        <end position="242"/>
    </location>
</feature>
<feature type="region of interest" description="Disordered" evidence="3">
    <location>
        <begin position="272"/>
        <end position="320"/>
    </location>
</feature>
<feature type="region of interest" description="Disordered" evidence="3">
    <location>
        <begin position="607"/>
        <end position="627"/>
    </location>
</feature>
<feature type="region of interest" description="Disordered" evidence="3">
    <location>
        <begin position="766"/>
        <end position="785"/>
    </location>
</feature>
<feature type="coiled-coil region" evidence="2">
    <location>
        <begin position="320"/>
        <end position="517"/>
    </location>
</feature>
<feature type="coiled-coil region" evidence="2">
    <location>
        <begin position="714"/>
        <end position="1110"/>
    </location>
</feature>
<feature type="compositionally biased region" description="Polar residues" evidence="3">
    <location>
        <begin position="286"/>
        <end position="297"/>
    </location>
</feature>
<feature type="splice variant" id="VSP_032811" description="In isoform 2." evidence="5">
    <original>MKTLRARFKKTELRLSPTDLGSCPPCGPCPIPKPAARGRRQ</original>
    <variation>MQPAACAGEGAGPPAPRPPHPPGDKVRRGRGGAPSLSPQPPAPYLGLPIPSRGGGGWRGGQGGGGGTREGGTGRAGGAGSSGSAQPRPPAAPRGPSRPSGRRLLLEPRAPPAPRAPDAMKQLCLCAAASFA</variation>
    <location>
        <begin position="1"/>
        <end position="41"/>
    </location>
</feature>
<feature type="sequence variant" id="VAR_042536" description="In dbSNP:rs2052191." evidence="4">
    <original>A</original>
    <variation>T</variation>
    <location>
        <position position="111"/>
    </location>
</feature>
<feature type="sequence variant" id="VAR_042537" description="In dbSNP:rs12978469." evidence="4">
    <original>R</original>
    <variation>Q</variation>
    <location>
        <position position="349"/>
    </location>
</feature>
<feature type="sequence variant" id="VAR_042538" description="In dbSNP:rs10413818." evidence="4">
    <original>E</original>
    <variation>K</variation>
    <location>
        <position position="585"/>
    </location>
</feature>
<feature type="sequence variant" id="VAR_042539" description="In dbSNP:rs353693." evidence="4">
    <original>S</original>
    <variation>A</variation>
    <location>
        <position position="684"/>
    </location>
</feature>
<comment type="function">
    <text evidence="1">Component of the stereocilia rootlet in hair cells of inner ear. Bridges the apical plasma membrane with the lower rootlet and maintains normal distribution of TRIOBP, thereby reinforcing stereocilia insertion points and organizing rootlets for hearing with long-term resilience.</text>
</comment>
<comment type="subunit">
    <text evidence="1">Homodimer. Interacts (via C-terminal domain) with TRIOBP (via C-terminal domain) isoform 4; recruits TRIOBP isoform 4 to stereocilia rootlets.</text>
</comment>
<comment type="subcellular location">
    <subcellularLocation>
        <location evidence="1">Cell membrane</location>
    </subcellularLocation>
    <subcellularLocation>
        <location evidence="1">Cell projection</location>
        <location evidence="1">Stereocilium</location>
    </subcellularLocation>
    <text evidence="1">Localizes to hair cell stereocilia rootlets. Concentrated to the stereolocilia insertion point.</text>
</comment>
<comment type="alternative products">
    <event type="alternative splicing"/>
    <isoform>
        <id>Q8TF21-1</id>
        <name>1</name>
        <sequence type="displayed"/>
    </isoform>
    <isoform>
        <id>Q8TF21-2</id>
        <name>2</name>
        <sequence type="described" ref="VSP_032811"/>
    </isoform>
</comment>
<comment type="sequence caution" evidence="6">
    <conflict type="erroneous gene model prediction">
        <sequence resource="EMBL-CDS" id="AAC33490"/>
    </conflict>
</comment>
<comment type="sequence caution" evidence="6">
    <conflict type="erroneous gene model prediction">
        <sequence resource="EMBL-CDS" id="AAD15479"/>
    </conflict>
</comment>
<sequence length="1146" mass="124187">MKTLRARFKKTELRLSPTDLGSCPPCGPCPIPKPAARGRRQSQDWGKSDERLLQAVENNDAPRVAALIARKGLVPTKLDPEGKSAFHLAAMRGAASCLEVMIAHGSNVMSADGAGYNALHLAAKYGHPQCLKQLLQASCVVDVVDSSGWTALHHAAAGGCLSCSEVLCSFKAHLNPQDRSGATPLIIAAQMCHTDLCRLLLQQGAAANDQDLQGRTALMLACEGASPETVEVLLQGGAQPGITDALGQDAAHYGALAGDKLILHLLQEAAQRPSPPSALTEDDSGEASSQNSMSSHGKQGAPKKRKAPPPPASIPMPDDRDAYEEIVRLRQERGRLLQKIRGLEQHKERRQQESPEASSLHILERQVQELQQLLVERQEEKESLGREVESLQSRLSLLENERENTSYDVTTLQDEEGELPDLPGAEVLLSRQLSPSAQEHLASLQEQVAVLTRQNQELMEKVQILENFEKDETQMEVEALAEVIPLALYDSLRAEFDQLRRQHAEALQALRQQETREVPREEGAACGESEVAGATATKNGPTHMELNGSVAPETKVNGAETIDEEAAGDETMEARTMEAEATGAEATGAEATGAKVTETKPTGAEVREMETTEEEANMETKPTGAQATDTETTGVEAMGVEATKTKAEEAEMQAYGVGAGQAEPPVTGTTNMEATGSRATGMESTGVSATGVENPGVEATVPGISAGPILHPGAAEASEKLQVELETRIRGLEEALRQREREAAAELEAALGKCEAAEAEAGRLRERVREAEGSGASGGGGGDTTQLRAALEQAREDLRDRDSRLRELEAASACLDEARASRLLAEEEARGLRAELAQREEARLEQSRELEVLREQLATARATGEQQRTAAAELGRARDAAEARVAELPAACEEARQGLAELREASEALRQSVVPASEHRRLQEEALELRGRAASLEQEVVATGKEAARLRAELERERVCSVALSEHERIVGTLQANVAQLEGQLEELGRRHEKTSAEVFQVQREALFMKSERHAAEAQLATAEQQLRGLRTEAERARQAQSRAQEALDKAKEKDKKITELSKEVFNLKEALKEQPAALATPEVEALRDQVKDLQQQLQEAARDHSSVVALYRSHLLYAIQGQMDEDVQRILSQILQMQRLQAQGR</sequence>
<reference key="1">
    <citation type="journal article" date="2004" name="Nature">
        <title>The DNA sequence and biology of human chromosome 19.</title>
        <authorList>
            <person name="Grimwood J."/>
            <person name="Gordon L.A."/>
            <person name="Olsen A.S."/>
            <person name="Terry A."/>
            <person name="Schmutz J."/>
            <person name="Lamerdin J.E."/>
            <person name="Hellsten U."/>
            <person name="Goodstein D."/>
            <person name="Couronne O."/>
            <person name="Tran-Gyamfi M."/>
            <person name="Aerts A."/>
            <person name="Altherr M."/>
            <person name="Ashworth L."/>
            <person name="Bajorek E."/>
            <person name="Black S."/>
            <person name="Branscomb E."/>
            <person name="Caenepeel S."/>
            <person name="Carrano A.V."/>
            <person name="Caoile C."/>
            <person name="Chan Y.M."/>
            <person name="Christensen M."/>
            <person name="Cleland C.A."/>
            <person name="Copeland A."/>
            <person name="Dalin E."/>
            <person name="Dehal P."/>
            <person name="Denys M."/>
            <person name="Detter J.C."/>
            <person name="Escobar J."/>
            <person name="Flowers D."/>
            <person name="Fotopulos D."/>
            <person name="Garcia C."/>
            <person name="Georgescu A.M."/>
            <person name="Glavina T."/>
            <person name="Gomez M."/>
            <person name="Gonzales E."/>
            <person name="Groza M."/>
            <person name="Hammon N."/>
            <person name="Hawkins T."/>
            <person name="Haydu L."/>
            <person name="Ho I."/>
            <person name="Huang W."/>
            <person name="Israni S."/>
            <person name="Jett J."/>
            <person name="Kadner K."/>
            <person name="Kimball H."/>
            <person name="Kobayashi A."/>
            <person name="Larionov V."/>
            <person name="Leem S.-H."/>
            <person name="Lopez F."/>
            <person name="Lou Y."/>
            <person name="Lowry S."/>
            <person name="Malfatti S."/>
            <person name="Martinez D."/>
            <person name="McCready P.M."/>
            <person name="Medina C."/>
            <person name="Morgan J."/>
            <person name="Nelson K."/>
            <person name="Nolan M."/>
            <person name="Ovcharenko I."/>
            <person name="Pitluck S."/>
            <person name="Pollard M."/>
            <person name="Popkie A.P."/>
            <person name="Predki P."/>
            <person name="Quan G."/>
            <person name="Ramirez L."/>
            <person name="Rash S."/>
            <person name="Retterer J."/>
            <person name="Rodriguez A."/>
            <person name="Rogers S."/>
            <person name="Salamov A."/>
            <person name="Salazar A."/>
            <person name="She X."/>
            <person name="Smith D."/>
            <person name="Slezak T."/>
            <person name="Solovyev V."/>
            <person name="Thayer N."/>
            <person name="Tice H."/>
            <person name="Tsai M."/>
            <person name="Ustaszewska A."/>
            <person name="Vo N."/>
            <person name="Wagner M."/>
            <person name="Wheeler J."/>
            <person name="Wu K."/>
            <person name="Xie G."/>
            <person name="Yang J."/>
            <person name="Dubchak I."/>
            <person name="Furey T.S."/>
            <person name="DeJong P."/>
            <person name="Dickson M."/>
            <person name="Gordon D."/>
            <person name="Eichler E.E."/>
            <person name="Pennacchio L.A."/>
            <person name="Richardson P."/>
            <person name="Stubbs L."/>
            <person name="Rokhsar D.S."/>
            <person name="Myers R.M."/>
            <person name="Rubin E.M."/>
            <person name="Lucas S.M."/>
        </authorList>
    </citation>
    <scope>NUCLEOTIDE SEQUENCE [LARGE SCALE GENOMIC DNA]</scope>
</reference>
<reference key="2">
    <citation type="journal article" date="2001" name="DNA Res.">
        <title>Prediction of the coding sequences of unidentified human genes. XXII. The complete sequences of 50 new cDNA clones which code for large proteins.</title>
        <authorList>
            <person name="Nagase T."/>
            <person name="Kikuno R."/>
            <person name="Ohara O."/>
        </authorList>
    </citation>
    <scope>NUCLEOTIDE SEQUENCE [LARGE SCALE MRNA] OF 100-872 (ISOFORM 2)</scope>
    <scope>VARIANTS THR-111; GLN-349; LYS-585 AND ALA-684</scope>
    <source>
        <tissue>Brain</tissue>
    </source>
</reference>
<keyword id="KW-0025">Alternative splicing</keyword>
<keyword id="KW-0040">ANK repeat</keyword>
<keyword id="KW-1003">Cell membrane</keyword>
<keyword id="KW-0966">Cell projection</keyword>
<keyword id="KW-0175">Coiled coil</keyword>
<keyword id="KW-0472">Membrane</keyword>
<keyword id="KW-1267">Proteomics identification</keyword>
<keyword id="KW-1185">Reference proteome</keyword>
<keyword id="KW-0677">Repeat</keyword>
<organism>
    <name type="scientific">Homo sapiens</name>
    <name type="common">Human</name>
    <dbReference type="NCBI Taxonomy" id="9606"/>
    <lineage>
        <taxon>Eukaryota</taxon>
        <taxon>Metazoa</taxon>
        <taxon>Chordata</taxon>
        <taxon>Craniata</taxon>
        <taxon>Vertebrata</taxon>
        <taxon>Euteleostomi</taxon>
        <taxon>Mammalia</taxon>
        <taxon>Eutheria</taxon>
        <taxon>Euarchontoglires</taxon>
        <taxon>Primates</taxon>
        <taxon>Haplorrhini</taxon>
        <taxon>Catarrhini</taxon>
        <taxon>Hominidae</taxon>
        <taxon>Homo</taxon>
    </lineage>
</organism>
<accession>Q8TF21</accession>
<accession>O75268</accession>
<accession>O95781</accession>